<comment type="function">
    <text evidence="1">This protein binds to the 23S rRNA, and is important in its secondary structure. It is located near the subunit interface in the base of the L7/L12 stalk, and near the tRNA binding site of the peptidyltransferase center.</text>
</comment>
<comment type="subunit">
    <text evidence="1">Part of the 50S ribosomal subunit.</text>
</comment>
<comment type="similarity">
    <text evidence="1">Belongs to the universal ribosomal protein uL6 family.</text>
</comment>
<keyword id="KW-0687">Ribonucleoprotein</keyword>
<keyword id="KW-0689">Ribosomal protein</keyword>
<keyword id="KW-0694">RNA-binding</keyword>
<keyword id="KW-0699">rRNA-binding</keyword>
<organism>
    <name type="scientific">Xylella fastidiosa (strain M23)</name>
    <dbReference type="NCBI Taxonomy" id="405441"/>
    <lineage>
        <taxon>Bacteria</taxon>
        <taxon>Pseudomonadati</taxon>
        <taxon>Pseudomonadota</taxon>
        <taxon>Gammaproteobacteria</taxon>
        <taxon>Lysobacterales</taxon>
        <taxon>Lysobacteraceae</taxon>
        <taxon>Xylella</taxon>
    </lineage>
</organism>
<name>RL6_XYLF2</name>
<protein>
    <recommendedName>
        <fullName evidence="1">Large ribosomal subunit protein uL6</fullName>
    </recommendedName>
    <alternativeName>
        <fullName evidence="2">50S ribosomal protein L6</fullName>
    </alternativeName>
</protein>
<evidence type="ECO:0000255" key="1">
    <source>
        <dbReference type="HAMAP-Rule" id="MF_01365"/>
    </source>
</evidence>
<evidence type="ECO:0000305" key="2"/>
<gene>
    <name evidence="1" type="primary">rplF</name>
    <name type="ordered locus">XfasM23_0448</name>
</gene>
<feature type="chain" id="PRO_1000144070" description="Large ribosomal subunit protein uL6">
    <location>
        <begin position="1"/>
        <end position="175"/>
    </location>
</feature>
<reference key="1">
    <citation type="journal article" date="2010" name="J. Bacteriol.">
        <title>Whole genome sequences of two Xylella fastidiosa strains (M12 and M23) causing almond leaf scorch disease in California.</title>
        <authorList>
            <person name="Chen J."/>
            <person name="Xie G."/>
            <person name="Han S."/>
            <person name="Chertkov O."/>
            <person name="Sims D."/>
            <person name="Civerolo E.L."/>
        </authorList>
    </citation>
    <scope>NUCLEOTIDE SEQUENCE [LARGE SCALE GENOMIC DNA]</scope>
    <source>
        <strain>M23</strain>
    </source>
</reference>
<accession>B2I8I4</accession>
<sequence>MSRVAKKPISIPKGVEVSVQSDMLTVKGVKGVLTFPKSDNVNVVMDGDILTLSANDHSHVSLAGTVRAILSNMIKGVSIGFERKLELVGVGYRASMQGKDLNLSLGFSHPLLFVPPEGINLLTPSQTEVVVQGIDKQRVGEVAAKIRNFRPPEPYKGKGLKYATEAIMRKEAKKA</sequence>
<dbReference type="EMBL" id="CP001011">
    <property type="protein sequence ID" value="ACB91895.1"/>
    <property type="molecule type" value="Genomic_DNA"/>
</dbReference>
<dbReference type="RefSeq" id="WP_004090121.1">
    <property type="nucleotide sequence ID" value="NC_010577.1"/>
</dbReference>
<dbReference type="SMR" id="B2I8I4"/>
<dbReference type="GeneID" id="93904154"/>
<dbReference type="KEGG" id="xfn:XfasM23_0448"/>
<dbReference type="HOGENOM" id="CLU_065464_1_2_6"/>
<dbReference type="Proteomes" id="UP000001698">
    <property type="component" value="Chromosome"/>
</dbReference>
<dbReference type="GO" id="GO:0022625">
    <property type="term" value="C:cytosolic large ribosomal subunit"/>
    <property type="evidence" value="ECO:0007669"/>
    <property type="project" value="TreeGrafter"/>
</dbReference>
<dbReference type="GO" id="GO:0019843">
    <property type="term" value="F:rRNA binding"/>
    <property type="evidence" value="ECO:0007669"/>
    <property type="project" value="UniProtKB-UniRule"/>
</dbReference>
<dbReference type="GO" id="GO:0003735">
    <property type="term" value="F:structural constituent of ribosome"/>
    <property type="evidence" value="ECO:0007669"/>
    <property type="project" value="InterPro"/>
</dbReference>
<dbReference type="GO" id="GO:0002181">
    <property type="term" value="P:cytoplasmic translation"/>
    <property type="evidence" value="ECO:0007669"/>
    <property type="project" value="TreeGrafter"/>
</dbReference>
<dbReference type="FunFam" id="3.90.930.12:FF:000001">
    <property type="entry name" value="50S ribosomal protein L6"/>
    <property type="match status" value="1"/>
</dbReference>
<dbReference type="Gene3D" id="3.90.930.12">
    <property type="entry name" value="Ribosomal protein L6, alpha-beta domain"/>
    <property type="match status" value="2"/>
</dbReference>
<dbReference type="HAMAP" id="MF_01365_B">
    <property type="entry name" value="Ribosomal_uL6_B"/>
    <property type="match status" value="1"/>
</dbReference>
<dbReference type="InterPro" id="IPR000702">
    <property type="entry name" value="Ribosomal_uL6-like"/>
</dbReference>
<dbReference type="InterPro" id="IPR036789">
    <property type="entry name" value="Ribosomal_uL6-like_a/b-dom_sf"/>
</dbReference>
<dbReference type="InterPro" id="IPR020040">
    <property type="entry name" value="Ribosomal_uL6_a/b-dom"/>
</dbReference>
<dbReference type="InterPro" id="IPR019906">
    <property type="entry name" value="Ribosomal_uL6_bac-type"/>
</dbReference>
<dbReference type="InterPro" id="IPR002358">
    <property type="entry name" value="Ribosomal_uL6_CS"/>
</dbReference>
<dbReference type="NCBIfam" id="TIGR03654">
    <property type="entry name" value="L6_bact"/>
    <property type="match status" value="1"/>
</dbReference>
<dbReference type="PANTHER" id="PTHR11655">
    <property type="entry name" value="60S/50S RIBOSOMAL PROTEIN L6/L9"/>
    <property type="match status" value="1"/>
</dbReference>
<dbReference type="PANTHER" id="PTHR11655:SF14">
    <property type="entry name" value="LARGE RIBOSOMAL SUBUNIT PROTEIN UL6M"/>
    <property type="match status" value="1"/>
</dbReference>
<dbReference type="Pfam" id="PF00347">
    <property type="entry name" value="Ribosomal_L6"/>
    <property type="match status" value="2"/>
</dbReference>
<dbReference type="PIRSF" id="PIRSF002162">
    <property type="entry name" value="Ribosomal_L6"/>
    <property type="match status" value="1"/>
</dbReference>
<dbReference type="PRINTS" id="PR00059">
    <property type="entry name" value="RIBOSOMALL6"/>
</dbReference>
<dbReference type="SUPFAM" id="SSF56053">
    <property type="entry name" value="Ribosomal protein L6"/>
    <property type="match status" value="2"/>
</dbReference>
<dbReference type="PROSITE" id="PS00525">
    <property type="entry name" value="RIBOSOMAL_L6_1"/>
    <property type="match status" value="1"/>
</dbReference>
<proteinExistence type="inferred from homology"/>